<proteinExistence type="inferred from homology"/>
<organism>
    <name type="scientific">Mycobacterium bovis (strain ATCC BAA-935 / AF2122/97)</name>
    <dbReference type="NCBI Taxonomy" id="233413"/>
    <lineage>
        <taxon>Bacteria</taxon>
        <taxon>Bacillati</taxon>
        <taxon>Actinomycetota</taxon>
        <taxon>Actinomycetes</taxon>
        <taxon>Mycobacteriales</taxon>
        <taxon>Mycobacteriaceae</taxon>
        <taxon>Mycobacterium</taxon>
        <taxon>Mycobacterium tuberculosis complex</taxon>
    </lineage>
</organism>
<sequence length="99" mass="10748">MSQISRDEVAHLARLARLALTETELDSFAGQLDAILTHVSQIQAVDVTGVQATDNPLKDVNVTRPDETVPCLTQRQVLDQAPDAVDGRFAVPQILGDEQ</sequence>
<name>GATC_MYCBO</name>
<dbReference type="EC" id="6.3.5.-"/>
<dbReference type="EMBL" id="LT708304">
    <property type="protein sequence ID" value="SIU01661.1"/>
    <property type="molecule type" value="Genomic_DNA"/>
</dbReference>
<dbReference type="RefSeq" id="NP_856682.1">
    <property type="nucleotide sequence ID" value="NC_002945.3"/>
</dbReference>
<dbReference type="RefSeq" id="WP_003415256.1">
    <property type="nucleotide sequence ID" value="NC_002945.4"/>
</dbReference>
<dbReference type="SMR" id="P64206"/>
<dbReference type="GeneID" id="45427002"/>
<dbReference type="KEGG" id="mbo:BQ2027_MB3037C"/>
<dbReference type="PATRIC" id="fig|233413.5.peg.3337"/>
<dbReference type="Proteomes" id="UP000001419">
    <property type="component" value="Chromosome"/>
</dbReference>
<dbReference type="GO" id="GO:0050566">
    <property type="term" value="F:asparaginyl-tRNA synthase (glutamine-hydrolyzing) activity"/>
    <property type="evidence" value="ECO:0007669"/>
    <property type="project" value="RHEA"/>
</dbReference>
<dbReference type="GO" id="GO:0005524">
    <property type="term" value="F:ATP binding"/>
    <property type="evidence" value="ECO:0007669"/>
    <property type="project" value="UniProtKB-KW"/>
</dbReference>
<dbReference type="GO" id="GO:0050567">
    <property type="term" value="F:glutaminyl-tRNA synthase (glutamine-hydrolyzing) activity"/>
    <property type="evidence" value="ECO:0007669"/>
    <property type="project" value="UniProtKB-UniRule"/>
</dbReference>
<dbReference type="GO" id="GO:0070681">
    <property type="term" value="P:glutaminyl-tRNAGln biosynthesis via transamidation"/>
    <property type="evidence" value="ECO:0007669"/>
    <property type="project" value="TreeGrafter"/>
</dbReference>
<dbReference type="GO" id="GO:0006450">
    <property type="term" value="P:regulation of translational fidelity"/>
    <property type="evidence" value="ECO:0007669"/>
    <property type="project" value="InterPro"/>
</dbReference>
<dbReference type="GO" id="GO:0006412">
    <property type="term" value="P:translation"/>
    <property type="evidence" value="ECO:0007669"/>
    <property type="project" value="UniProtKB-UniRule"/>
</dbReference>
<dbReference type="FunFam" id="1.10.20.60:FF:000001">
    <property type="entry name" value="Aspartyl/glutamyl-tRNA(Asn/Gln) amidotransferase subunit C"/>
    <property type="match status" value="1"/>
</dbReference>
<dbReference type="Gene3D" id="1.10.20.60">
    <property type="entry name" value="Glu-tRNAGln amidotransferase C subunit, N-terminal domain"/>
    <property type="match status" value="1"/>
</dbReference>
<dbReference type="HAMAP" id="MF_00122">
    <property type="entry name" value="GatC"/>
    <property type="match status" value="1"/>
</dbReference>
<dbReference type="InterPro" id="IPR036113">
    <property type="entry name" value="Asp/Glu-ADT_sf_sub_c"/>
</dbReference>
<dbReference type="InterPro" id="IPR003837">
    <property type="entry name" value="GatC"/>
</dbReference>
<dbReference type="NCBIfam" id="TIGR00135">
    <property type="entry name" value="gatC"/>
    <property type="match status" value="1"/>
</dbReference>
<dbReference type="PANTHER" id="PTHR15004">
    <property type="entry name" value="GLUTAMYL-TRNA(GLN) AMIDOTRANSFERASE SUBUNIT C, MITOCHONDRIAL"/>
    <property type="match status" value="1"/>
</dbReference>
<dbReference type="PANTHER" id="PTHR15004:SF0">
    <property type="entry name" value="GLUTAMYL-TRNA(GLN) AMIDOTRANSFERASE SUBUNIT C, MITOCHONDRIAL"/>
    <property type="match status" value="1"/>
</dbReference>
<dbReference type="Pfam" id="PF02686">
    <property type="entry name" value="GatC"/>
    <property type="match status" value="1"/>
</dbReference>
<dbReference type="SUPFAM" id="SSF141000">
    <property type="entry name" value="Glu-tRNAGln amidotransferase C subunit"/>
    <property type="match status" value="1"/>
</dbReference>
<evidence type="ECO:0000250" key="1"/>
<evidence type="ECO:0000305" key="2"/>
<feature type="chain" id="PRO_0000105313" description="Glutamyl-tRNA(Gln) amidotransferase subunit C">
    <location>
        <begin position="1"/>
        <end position="99"/>
    </location>
</feature>
<keyword id="KW-0067">ATP-binding</keyword>
<keyword id="KW-0436">Ligase</keyword>
<keyword id="KW-0547">Nucleotide-binding</keyword>
<keyword id="KW-0648">Protein biosynthesis</keyword>
<keyword id="KW-1185">Reference proteome</keyword>
<reference key="1">
    <citation type="journal article" date="2003" name="Proc. Natl. Acad. Sci. U.S.A.">
        <title>The complete genome sequence of Mycobacterium bovis.</title>
        <authorList>
            <person name="Garnier T."/>
            <person name="Eiglmeier K."/>
            <person name="Camus J.-C."/>
            <person name="Medina N."/>
            <person name="Mansoor H."/>
            <person name="Pryor M."/>
            <person name="Duthoy S."/>
            <person name="Grondin S."/>
            <person name="Lacroix C."/>
            <person name="Monsempe C."/>
            <person name="Simon S."/>
            <person name="Harris B."/>
            <person name="Atkin R."/>
            <person name="Doggett J."/>
            <person name="Mayes R."/>
            <person name="Keating L."/>
            <person name="Wheeler P.R."/>
            <person name="Parkhill J."/>
            <person name="Barrell B.G."/>
            <person name="Cole S.T."/>
            <person name="Gordon S.V."/>
            <person name="Hewinson R.G."/>
        </authorList>
    </citation>
    <scope>NUCLEOTIDE SEQUENCE [LARGE SCALE GENOMIC DNA]</scope>
    <source>
        <strain>ATCC BAA-935 / AF2122/97</strain>
    </source>
</reference>
<reference key="2">
    <citation type="journal article" date="2017" name="Genome Announc.">
        <title>Updated reference genome sequence and annotation of Mycobacterium bovis AF2122/97.</title>
        <authorList>
            <person name="Malone K.M."/>
            <person name="Farrell D."/>
            <person name="Stuber T.P."/>
            <person name="Schubert O.T."/>
            <person name="Aebersold R."/>
            <person name="Robbe-Austerman S."/>
            <person name="Gordon S.V."/>
        </authorList>
    </citation>
    <scope>NUCLEOTIDE SEQUENCE [LARGE SCALE GENOMIC DNA]</scope>
    <scope>GENOME REANNOTATION</scope>
    <source>
        <strain>ATCC BAA-935 / AF2122/97</strain>
    </source>
</reference>
<accession>P64206</accession>
<accession>A0A1R3Y2V1</accession>
<accession>O53259</accession>
<accession>X2BMU2</accession>
<comment type="function">
    <text evidence="1">Allows the formation of correctly charged Asn-tRNA(Asn) or Gln-tRNA(Gln) through the transamidation of misacylated Asp-tRNA(Asn) or Glu-tRNA(Gln) in organisms which lack either or both of asparaginyl-tRNA or glutaminyl-tRNA synthetases. The reaction takes place in the presence of glutamine and ATP through an activated phospho-Asp-tRNA(Asn) or phospho-Glu-tRNA(Gln) (By similarity).</text>
</comment>
<comment type="catalytic activity">
    <reaction>
        <text>L-glutamyl-tRNA(Gln) + L-glutamine + ATP + H2O = L-glutaminyl-tRNA(Gln) + L-glutamate + ADP + phosphate + H(+)</text>
        <dbReference type="Rhea" id="RHEA:17521"/>
        <dbReference type="Rhea" id="RHEA-COMP:9681"/>
        <dbReference type="Rhea" id="RHEA-COMP:9684"/>
        <dbReference type="ChEBI" id="CHEBI:15377"/>
        <dbReference type="ChEBI" id="CHEBI:15378"/>
        <dbReference type="ChEBI" id="CHEBI:29985"/>
        <dbReference type="ChEBI" id="CHEBI:30616"/>
        <dbReference type="ChEBI" id="CHEBI:43474"/>
        <dbReference type="ChEBI" id="CHEBI:58359"/>
        <dbReference type="ChEBI" id="CHEBI:78520"/>
        <dbReference type="ChEBI" id="CHEBI:78521"/>
        <dbReference type="ChEBI" id="CHEBI:456216"/>
    </reaction>
</comment>
<comment type="catalytic activity">
    <reaction>
        <text>L-aspartyl-tRNA(Asn) + L-glutamine + ATP + H2O = L-asparaginyl-tRNA(Asn) + L-glutamate + ADP + phosphate + 2 H(+)</text>
        <dbReference type="Rhea" id="RHEA:14513"/>
        <dbReference type="Rhea" id="RHEA-COMP:9674"/>
        <dbReference type="Rhea" id="RHEA-COMP:9677"/>
        <dbReference type="ChEBI" id="CHEBI:15377"/>
        <dbReference type="ChEBI" id="CHEBI:15378"/>
        <dbReference type="ChEBI" id="CHEBI:29985"/>
        <dbReference type="ChEBI" id="CHEBI:30616"/>
        <dbReference type="ChEBI" id="CHEBI:43474"/>
        <dbReference type="ChEBI" id="CHEBI:58359"/>
        <dbReference type="ChEBI" id="CHEBI:78515"/>
        <dbReference type="ChEBI" id="CHEBI:78516"/>
        <dbReference type="ChEBI" id="CHEBI:456216"/>
    </reaction>
</comment>
<comment type="subunit">
    <text evidence="1">Heterotrimer of A, B and C subunits.</text>
</comment>
<comment type="similarity">
    <text evidence="2">Belongs to the GatC family.</text>
</comment>
<gene>
    <name type="primary">gatC</name>
    <name type="ordered locus">BQ2027_MB3037C</name>
</gene>
<protein>
    <recommendedName>
        <fullName>Glutamyl-tRNA(Gln) amidotransferase subunit C</fullName>
        <shortName>Glu-ADT subunit C</shortName>
        <ecNumber>6.3.5.-</ecNumber>
    </recommendedName>
</protein>